<evidence type="ECO:0000255" key="1">
    <source>
        <dbReference type="HAMAP-Rule" id="MF_00649"/>
    </source>
</evidence>
<gene>
    <name evidence="1" type="primary">yacG</name>
    <name type="ordered locus">Smed_0213</name>
</gene>
<comment type="function">
    <text evidence="1">Inhibits all the catalytic activities of DNA gyrase by preventing its interaction with DNA. Acts by binding directly to the C-terminal domain of GyrB, which probably disrupts DNA binding by the gyrase.</text>
</comment>
<comment type="cofactor">
    <cofactor evidence="1">
        <name>Zn(2+)</name>
        <dbReference type="ChEBI" id="CHEBI:29105"/>
    </cofactor>
    <text evidence="1">Binds 1 zinc ion.</text>
</comment>
<comment type="subunit">
    <text evidence="1">Interacts with GyrB.</text>
</comment>
<comment type="similarity">
    <text evidence="1">Belongs to the DNA gyrase inhibitor YacG family.</text>
</comment>
<dbReference type="EMBL" id="CP000738">
    <property type="protein sequence ID" value="ABR59072.1"/>
    <property type="molecule type" value="Genomic_DNA"/>
</dbReference>
<dbReference type="RefSeq" id="WP_011974424.1">
    <property type="nucleotide sequence ID" value="NC_009636.1"/>
</dbReference>
<dbReference type="RefSeq" id="YP_001325907.1">
    <property type="nucleotide sequence ID" value="NC_009636.1"/>
</dbReference>
<dbReference type="SMR" id="A6U5Z2"/>
<dbReference type="STRING" id="366394.Smed_0213"/>
<dbReference type="GeneID" id="61613053"/>
<dbReference type="KEGG" id="smd:Smed_0213"/>
<dbReference type="PATRIC" id="fig|366394.8.peg.3277"/>
<dbReference type="eggNOG" id="COG3024">
    <property type="taxonomic scope" value="Bacteria"/>
</dbReference>
<dbReference type="HOGENOM" id="CLU_178280_2_2_5"/>
<dbReference type="OrthoDB" id="9809663at2"/>
<dbReference type="Proteomes" id="UP000001108">
    <property type="component" value="Chromosome"/>
</dbReference>
<dbReference type="GO" id="GO:0008657">
    <property type="term" value="F:DNA topoisomerase type II (double strand cut, ATP-hydrolyzing) inhibitor activity"/>
    <property type="evidence" value="ECO:0007669"/>
    <property type="project" value="UniProtKB-UniRule"/>
</dbReference>
<dbReference type="GO" id="GO:0008270">
    <property type="term" value="F:zinc ion binding"/>
    <property type="evidence" value="ECO:0007669"/>
    <property type="project" value="UniProtKB-UniRule"/>
</dbReference>
<dbReference type="GO" id="GO:0006355">
    <property type="term" value="P:regulation of DNA-templated transcription"/>
    <property type="evidence" value="ECO:0007669"/>
    <property type="project" value="InterPro"/>
</dbReference>
<dbReference type="Gene3D" id="3.30.50.10">
    <property type="entry name" value="Erythroid Transcription Factor GATA-1, subunit A"/>
    <property type="match status" value="1"/>
</dbReference>
<dbReference type="HAMAP" id="MF_00649">
    <property type="entry name" value="DNA_gyrase_inhibitor_YacG"/>
    <property type="match status" value="1"/>
</dbReference>
<dbReference type="InterPro" id="IPR005584">
    <property type="entry name" value="DNA_gyrase_inhibitor_YacG"/>
</dbReference>
<dbReference type="InterPro" id="IPR013088">
    <property type="entry name" value="Znf_NHR/GATA"/>
</dbReference>
<dbReference type="NCBIfam" id="NF002362">
    <property type="entry name" value="PRK01343.1"/>
    <property type="match status" value="1"/>
</dbReference>
<dbReference type="PANTHER" id="PTHR36150">
    <property type="entry name" value="DNA GYRASE INHIBITOR YACG"/>
    <property type="match status" value="1"/>
</dbReference>
<dbReference type="PANTHER" id="PTHR36150:SF1">
    <property type="entry name" value="DNA GYRASE INHIBITOR YACG"/>
    <property type="match status" value="1"/>
</dbReference>
<dbReference type="Pfam" id="PF03884">
    <property type="entry name" value="YacG"/>
    <property type="match status" value="1"/>
</dbReference>
<dbReference type="SUPFAM" id="SSF57716">
    <property type="entry name" value="Glucocorticoid receptor-like (DNA-binding domain)"/>
    <property type="match status" value="1"/>
</dbReference>
<reference key="1">
    <citation type="submission" date="2007-06" db="EMBL/GenBank/DDBJ databases">
        <title>Complete sequence of Sinorhizobium medicae WSM419 chromosome.</title>
        <authorList>
            <consortium name="US DOE Joint Genome Institute"/>
            <person name="Copeland A."/>
            <person name="Lucas S."/>
            <person name="Lapidus A."/>
            <person name="Barry K."/>
            <person name="Glavina del Rio T."/>
            <person name="Dalin E."/>
            <person name="Tice H."/>
            <person name="Pitluck S."/>
            <person name="Chain P."/>
            <person name="Malfatti S."/>
            <person name="Shin M."/>
            <person name="Vergez L."/>
            <person name="Schmutz J."/>
            <person name="Larimer F."/>
            <person name="Land M."/>
            <person name="Hauser L."/>
            <person name="Kyrpides N."/>
            <person name="Mikhailova N."/>
            <person name="Reeve W.G."/>
            <person name="Richardson P."/>
        </authorList>
    </citation>
    <scope>NUCLEOTIDE SEQUENCE [LARGE SCALE GENOMIC DNA]</scope>
    <source>
        <strain>WSM419</strain>
    </source>
</reference>
<sequence length="70" mass="7870">MRGGGKKNASNVEPLRATRPCAECGRPSVREHYPFCSERCRNVDLNRWLSGSYAIPVADDESKADDEDER</sequence>
<keyword id="KW-0479">Metal-binding</keyword>
<keyword id="KW-0862">Zinc</keyword>
<name>YACG_SINMW</name>
<feature type="chain" id="PRO_1000057001" description="DNA gyrase inhibitor YacG">
    <location>
        <begin position="1"/>
        <end position="70"/>
    </location>
</feature>
<feature type="binding site" evidence="1">
    <location>
        <position position="21"/>
    </location>
    <ligand>
        <name>Zn(2+)</name>
        <dbReference type="ChEBI" id="CHEBI:29105"/>
    </ligand>
</feature>
<feature type="binding site" evidence="1">
    <location>
        <position position="24"/>
    </location>
    <ligand>
        <name>Zn(2+)</name>
        <dbReference type="ChEBI" id="CHEBI:29105"/>
    </ligand>
</feature>
<feature type="binding site" evidence="1">
    <location>
        <position position="36"/>
    </location>
    <ligand>
        <name>Zn(2+)</name>
        <dbReference type="ChEBI" id="CHEBI:29105"/>
    </ligand>
</feature>
<feature type="binding site" evidence="1">
    <location>
        <position position="40"/>
    </location>
    <ligand>
        <name>Zn(2+)</name>
        <dbReference type="ChEBI" id="CHEBI:29105"/>
    </ligand>
</feature>
<organism>
    <name type="scientific">Sinorhizobium medicae (strain WSM419)</name>
    <name type="common">Ensifer medicae</name>
    <dbReference type="NCBI Taxonomy" id="366394"/>
    <lineage>
        <taxon>Bacteria</taxon>
        <taxon>Pseudomonadati</taxon>
        <taxon>Pseudomonadota</taxon>
        <taxon>Alphaproteobacteria</taxon>
        <taxon>Hyphomicrobiales</taxon>
        <taxon>Rhizobiaceae</taxon>
        <taxon>Sinorhizobium/Ensifer group</taxon>
        <taxon>Sinorhizobium</taxon>
    </lineage>
</organism>
<accession>A6U5Z2</accession>
<protein>
    <recommendedName>
        <fullName evidence="1">DNA gyrase inhibitor YacG</fullName>
    </recommendedName>
</protein>
<proteinExistence type="inferred from homology"/>